<organism>
    <name type="scientific">Methanocella arvoryzae (strain DSM 22066 / NBRC 105507 / MRE50)</name>
    <dbReference type="NCBI Taxonomy" id="351160"/>
    <lineage>
        <taxon>Archaea</taxon>
        <taxon>Methanobacteriati</taxon>
        <taxon>Methanobacteriota</taxon>
        <taxon>Stenosarchaea group</taxon>
        <taxon>Methanomicrobia</taxon>
        <taxon>Methanocellales</taxon>
        <taxon>Methanocellaceae</taxon>
        <taxon>Methanocella</taxon>
    </lineage>
</organism>
<evidence type="ECO:0000255" key="1">
    <source>
        <dbReference type="HAMAP-Rule" id="MF_01345"/>
    </source>
</evidence>
<evidence type="ECO:0000305" key="2"/>
<gene>
    <name evidence="1" type="primary">rps17</name>
    <name type="ordered locus">UNCMA_06420</name>
    <name type="ORF">RCIX2553</name>
</gene>
<reference key="1">
    <citation type="journal article" date="2006" name="Science">
        <title>Genome of rice cluster I archaea -- the key methane producers in the rice rhizosphere.</title>
        <authorList>
            <person name="Erkel C."/>
            <person name="Kube M."/>
            <person name="Reinhardt R."/>
            <person name="Liesack W."/>
        </authorList>
    </citation>
    <scope>NUCLEOTIDE SEQUENCE [LARGE SCALE GENOMIC DNA]</scope>
    <source>
        <strain>DSM 22066 / NBRC 105507 / MRE50</strain>
    </source>
</reference>
<protein>
    <recommendedName>
        <fullName evidence="1">Small ribosomal subunit protein uS17</fullName>
    </recommendedName>
    <alternativeName>
        <fullName evidence="2">30S ribosomal protein S17</fullName>
    </alternativeName>
</protein>
<feature type="chain" id="PRO_1000055044" description="Small ribosomal subunit protein uS17">
    <location>
        <begin position="1"/>
        <end position="111"/>
    </location>
</feature>
<sequence>MAKDIGLNVKAPKTECNDPQCPFHGSLAVRGQIFEGTVVSAKMSKSVVVSREYLKRDLKYDRYEKRRSKLHAHNPPCINAKEGDKVVIAECRPLSKTKTFVVVEVAGHESN</sequence>
<name>RS17_METAR</name>
<proteinExistence type="inferred from homology"/>
<comment type="function">
    <text evidence="1">One of the primary rRNA binding proteins, it binds specifically to the 5'-end of 16S ribosomal RNA.</text>
</comment>
<comment type="subunit">
    <text evidence="1">Part of the 30S ribosomal subunit.</text>
</comment>
<comment type="similarity">
    <text evidence="1">Belongs to the universal ribosomal protein uS17 family.</text>
</comment>
<keyword id="KW-1185">Reference proteome</keyword>
<keyword id="KW-0687">Ribonucleoprotein</keyword>
<keyword id="KW-0689">Ribosomal protein</keyword>
<keyword id="KW-0694">RNA-binding</keyword>
<keyword id="KW-0699">rRNA-binding</keyword>
<dbReference type="EMBL" id="AM114193">
    <property type="protein sequence ID" value="CAJ37614.1"/>
    <property type="molecule type" value="Genomic_DNA"/>
</dbReference>
<dbReference type="RefSeq" id="WP_012034971.1">
    <property type="nucleotide sequence ID" value="NC_009464.1"/>
</dbReference>
<dbReference type="SMR" id="Q0W1X9"/>
<dbReference type="STRING" id="351160.RCIX2553"/>
<dbReference type="GeneID" id="5144365"/>
<dbReference type="KEGG" id="rci:RCIX2553"/>
<dbReference type="PATRIC" id="fig|351160.9.peg.669"/>
<dbReference type="eggNOG" id="arCOG04096">
    <property type="taxonomic scope" value="Archaea"/>
</dbReference>
<dbReference type="OrthoDB" id="10698at2157"/>
<dbReference type="Proteomes" id="UP000000663">
    <property type="component" value="Chromosome"/>
</dbReference>
<dbReference type="GO" id="GO:0022627">
    <property type="term" value="C:cytosolic small ribosomal subunit"/>
    <property type="evidence" value="ECO:0007669"/>
    <property type="project" value="TreeGrafter"/>
</dbReference>
<dbReference type="GO" id="GO:0019843">
    <property type="term" value="F:rRNA binding"/>
    <property type="evidence" value="ECO:0007669"/>
    <property type="project" value="UniProtKB-UniRule"/>
</dbReference>
<dbReference type="GO" id="GO:0003735">
    <property type="term" value="F:structural constituent of ribosome"/>
    <property type="evidence" value="ECO:0007669"/>
    <property type="project" value="InterPro"/>
</dbReference>
<dbReference type="GO" id="GO:0006412">
    <property type="term" value="P:translation"/>
    <property type="evidence" value="ECO:0007669"/>
    <property type="project" value="UniProtKB-UniRule"/>
</dbReference>
<dbReference type="CDD" id="cd00364">
    <property type="entry name" value="Ribosomal_uS17"/>
    <property type="match status" value="1"/>
</dbReference>
<dbReference type="FunFam" id="2.40.50.1000:FF:000005">
    <property type="entry name" value="30S ribosomal protein S17"/>
    <property type="match status" value="1"/>
</dbReference>
<dbReference type="Gene3D" id="2.40.50.1000">
    <property type="match status" value="1"/>
</dbReference>
<dbReference type="HAMAP" id="MF_01345_A">
    <property type="entry name" value="Ribosomal_uS17_A"/>
    <property type="match status" value="1"/>
</dbReference>
<dbReference type="InterPro" id="IPR012340">
    <property type="entry name" value="NA-bd_OB-fold"/>
</dbReference>
<dbReference type="InterPro" id="IPR000266">
    <property type="entry name" value="Ribosomal_uS17"/>
</dbReference>
<dbReference type="InterPro" id="IPR028333">
    <property type="entry name" value="Ribosomal_uS17_arc/euk"/>
</dbReference>
<dbReference type="InterPro" id="IPR019978">
    <property type="entry name" value="Ribosomal_uS17_archaeal"/>
</dbReference>
<dbReference type="InterPro" id="IPR019979">
    <property type="entry name" value="Ribosomal_uS17_CS"/>
</dbReference>
<dbReference type="NCBIfam" id="NF006345">
    <property type="entry name" value="PRK08572.1"/>
    <property type="match status" value="1"/>
</dbReference>
<dbReference type="NCBIfam" id="TIGR03630">
    <property type="entry name" value="uS17_arch"/>
    <property type="match status" value="1"/>
</dbReference>
<dbReference type="PANTHER" id="PTHR10744">
    <property type="entry name" value="40S RIBOSOMAL PROTEIN S11 FAMILY MEMBER"/>
    <property type="match status" value="1"/>
</dbReference>
<dbReference type="PANTHER" id="PTHR10744:SF9">
    <property type="entry name" value="40S RIBOSOMAL PROTEIN S11-RELATED"/>
    <property type="match status" value="1"/>
</dbReference>
<dbReference type="Pfam" id="PF00366">
    <property type="entry name" value="Ribosomal_S17"/>
    <property type="match status" value="1"/>
</dbReference>
<dbReference type="PRINTS" id="PR00973">
    <property type="entry name" value="RIBOSOMALS17"/>
</dbReference>
<dbReference type="SUPFAM" id="SSF50249">
    <property type="entry name" value="Nucleic acid-binding proteins"/>
    <property type="match status" value="1"/>
</dbReference>
<dbReference type="PROSITE" id="PS00056">
    <property type="entry name" value="RIBOSOMAL_S17"/>
    <property type="match status" value="1"/>
</dbReference>
<accession>Q0W1X9</accession>